<name>CYB_POLBI</name>
<accession>O79657</accession>
<accession>Q8M0E2</accession>
<dbReference type="EMBL" id="AF028799">
    <property type="protein sequence ID" value="AAC62189.1"/>
    <property type="molecule type" value="Genomic_DNA"/>
</dbReference>
<dbReference type="EMBL" id="AF534564">
    <property type="protein sequence ID" value="AAN04879.1"/>
    <property type="molecule type" value="Genomic_DNA"/>
</dbReference>
<dbReference type="RefSeq" id="YP_003002149.1">
    <property type="nucleotide sequence ID" value="NC_012900.1"/>
</dbReference>
<dbReference type="SMR" id="O79657"/>
<dbReference type="GeneID" id="8097348"/>
<dbReference type="CTD" id="4519"/>
<dbReference type="GO" id="GO:0005743">
    <property type="term" value="C:mitochondrial inner membrane"/>
    <property type="evidence" value="ECO:0007669"/>
    <property type="project" value="UniProtKB-SubCell"/>
</dbReference>
<dbReference type="GO" id="GO:0045275">
    <property type="term" value="C:respiratory chain complex III"/>
    <property type="evidence" value="ECO:0007669"/>
    <property type="project" value="InterPro"/>
</dbReference>
<dbReference type="GO" id="GO:0046872">
    <property type="term" value="F:metal ion binding"/>
    <property type="evidence" value="ECO:0007669"/>
    <property type="project" value="UniProtKB-KW"/>
</dbReference>
<dbReference type="GO" id="GO:0008121">
    <property type="term" value="F:ubiquinol-cytochrome-c reductase activity"/>
    <property type="evidence" value="ECO:0007669"/>
    <property type="project" value="InterPro"/>
</dbReference>
<dbReference type="GO" id="GO:0006122">
    <property type="term" value="P:mitochondrial electron transport, ubiquinol to cytochrome c"/>
    <property type="evidence" value="ECO:0007669"/>
    <property type="project" value="TreeGrafter"/>
</dbReference>
<dbReference type="CDD" id="cd00290">
    <property type="entry name" value="cytochrome_b_C"/>
    <property type="match status" value="1"/>
</dbReference>
<dbReference type="CDD" id="cd00284">
    <property type="entry name" value="Cytochrome_b_N"/>
    <property type="match status" value="1"/>
</dbReference>
<dbReference type="FunFam" id="1.20.810.10:FF:000002">
    <property type="entry name" value="Cytochrome b"/>
    <property type="match status" value="1"/>
</dbReference>
<dbReference type="Gene3D" id="1.20.810.10">
    <property type="entry name" value="Cytochrome Bc1 Complex, Chain C"/>
    <property type="match status" value="1"/>
</dbReference>
<dbReference type="InterPro" id="IPR005798">
    <property type="entry name" value="Cyt_b/b6_C"/>
</dbReference>
<dbReference type="InterPro" id="IPR036150">
    <property type="entry name" value="Cyt_b/b6_C_sf"/>
</dbReference>
<dbReference type="InterPro" id="IPR005797">
    <property type="entry name" value="Cyt_b/b6_N"/>
</dbReference>
<dbReference type="InterPro" id="IPR027387">
    <property type="entry name" value="Cytb/b6-like_sf"/>
</dbReference>
<dbReference type="InterPro" id="IPR030689">
    <property type="entry name" value="Cytochrome_b"/>
</dbReference>
<dbReference type="InterPro" id="IPR048260">
    <property type="entry name" value="Cytochrome_b_C_euk/bac"/>
</dbReference>
<dbReference type="InterPro" id="IPR048259">
    <property type="entry name" value="Cytochrome_b_N_euk/bac"/>
</dbReference>
<dbReference type="InterPro" id="IPR016174">
    <property type="entry name" value="Di-haem_cyt_TM"/>
</dbReference>
<dbReference type="PANTHER" id="PTHR19271">
    <property type="entry name" value="CYTOCHROME B"/>
    <property type="match status" value="1"/>
</dbReference>
<dbReference type="PANTHER" id="PTHR19271:SF16">
    <property type="entry name" value="CYTOCHROME B"/>
    <property type="match status" value="1"/>
</dbReference>
<dbReference type="Pfam" id="PF00032">
    <property type="entry name" value="Cytochrom_B_C"/>
    <property type="match status" value="1"/>
</dbReference>
<dbReference type="Pfam" id="PF00033">
    <property type="entry name" value="Cytochrome_B"/>
    <property type="match status" value="1"/>
</dbReference>
<dbReference type="PIRSF" id="PIRSF038885">
    <property type="entry name" value="COB"/>
    <property type="match status" value="1"/>
</dbReference>
<dbReference type="SUPFAM" id="SSF81648">
    <property type="entry name" value="a domain/subunit of cytochrome bc1 complex (Ubiquinol-cytochrome c reductase)"/>
    <property type="match status" value="1"/>
</dbReference>
<dbReference type="SUPFAM" id="SSF81342">
    <property type="entry name" value="Transmembrane di-heme cytochromes"/>
    <property type="match status" value="1"/>
</dbReference>
<dbReference type="PROSITE" id="PS51003">
    <property type="entry name" value="CYTB_CTER"/>
    <property type="match status" value="1"/>
</dbReference>
<dbReference type="PROSITE" id="PS51002">
    <property type="entry name" value="CYTB_NTER"/>
    <property type="match status" value="1"/>
</dbReference>
<organism>
    <name type="scientific">Polyplectron bicalcaratum</name>
    <name type="common">Grey peacock-pheasant</name>
    <name type="synonym">Pavo bicalcaratus</name>
    <dbReference type="NCBI Taxonomy" id="9059"/>
    <lineage>
        <taxon>Eukaryota</taxon>
        <taxon>Metazoa</taxon>
        <taxon>Chordata</taxon>
        <taxon>Craniata</taxon>
        <taxon>Vertebrata</taxon>
        <taxon>Euteleostomi</taxon>
        <taxon>Archelosauria</taxon>
        <taxon>Archosauria</taxon>
        <taxon>Dinosauria</taxon>
        <taxon>Saurischia</taxon>
        <taxon>Theropoda</taxon>
        <taxon>Coelurosauria</taxon>
        <taxon>Aves</taxon>
        <taxon>Neognathae</taxon>
        <taxon>Galloanserae</taxon>
        <taxon>Galliformes</taxon>
        <taxon>Phasianidae</taxon>
        <taxon>Phasianinae</taxon>
        <taxon>Polyplectron</taxon>
    </lineage>
</organism>
<evidence type="ECO:0000250" key="1"/>
<evidence type="ECO:0000250" key="2">
    <source>
        <dbReference type="UniProtKB" id="P00157"/>
    </source>
</evidence>
<evidence type="ECO:0000255" key="3">
    <source>
        <dbReference type="PROSITE-ProRule" id="PRU00967"/>
    </source>
</evidence>
<evidence type="ECO:0000255" key="4">
    <source>
        <dbReference type="PROSITE-ProRule" id="PRU00968"/>
    </source>
</evidence>
<evidence type="ECO:0000305" key="5"/>
<gene>
    <name type="primary">MT-CYB</name>
    <name type="synonym">COB</name>
    <name type="synonym">CYTB</name>
    <name type="synonym">MTCYB</name>
</gene>
<proteinExistence type="inferred from homology"/>
<feature type="chain" id="PRO_0000061421" description="Cytochrome b">
    <location>
        <begin position="1"/>
        <end position="380"/>
    </location>
</feature>
<feature type="transmembrane region" description="Helical" evidence="2">
    <location>
        <begin position="34"/>
        <end position="54"/>
    </location>
</feature>
<feature type="transmembrane region" description="Helical" evidence="2">
    <location>
        <begin position="78"/>
        <end position="99"/>
    </location>
</feature>
<feature type="transmembrane region" description="Helical" evidence="2">
    <location>
        <begin position="114"/>
        <end position="134"/>
    </location>
</feature>
<feature type="transmembrane region" description="Helical" evidence="2">
    <location>
        <begin position="179"/>
        <end position="199"/>
    </location>
</feature>
<feature type="transmembrane region" description="Helical" evidence="2">
    <location>
        <begin position="227"/>
        <end position="247"/>
    </location>
</feature>
<feature type="transmembrane region" description="Helical" evidence="2">
    <location>
        <begin position="289"/>
        <end position="309"/>
    </location>
</feature>
<feature type="transmembrane region" description="Helical" evidence="2">
    <location>
        <begin position="321"/>
        <end position="341"/>
    </location>
</feature>
<feature type="transmembrane region" description="Helical" evidence="2">
    <location>
        <begin position="348"/>
        <end position="368"/>
    </location>
</feature>
<feature type="binding site" description="axial binding residue" evidence="2">
    <location>
        <position position="84"/>
    </location>
    <ligand>
        <name>heme b</name>
        <dbReference type="ChEBI" id="CHEBI:60344"/>
        <label>b562</label>
    </ligand>
    <ligandPart>
        <name>Fe</name>
        <dbReference type="ChEBI" id="CHEBI:18248"/>
    </ligandPart>
</feature>
<feature type="binding site" description="axial binding residue" evidence="2">
    <location>
        <position position="98"/>
    </location>
    <ligand>
        <name>heme b</name>
        <dbReference type="ChEBI" id="CHEBI:60344"/>
        <label>b566</label>
    </ligand>
    <ligandPart>
        <name>Fe</name>
        <dbReference type="ChEBI" id="CHEBI:18248"/>
    </ligandPart>
</feature>
<feature type="binding site" description="axial binding residue" evidence="2">
    <location>
        <position position="183"/>
    </location>
    <ligand>
        <name>heme b</name>
        <dbReference type="ChEBI" id="CHEBI:60344"/>
        <label>b562</label>
    </ligand>
    <ligandPart>
        <name>Fe</name>
        <dbReference type="ChEBI" id="CHEBI:18248"/>
    </ligandPart>
</feature>
<feature type="binding site" description="axial binding residue" evidence="2">
    <location>
        <position position="197"/>
    </location>
    <ligand>
        <name>heme b</name>
        <dbReference type="ChEBI" id="CHEBI:60344"/>
        <label>b566</label>
    </ligand>
    <ligandPart>
        <name>Fe</name>
        <dbReference type="ChEBI" id="CHEBI:18248"/>
    </ligandPart>
</feature>
<feature type="binding site" evidence="2">
    <location>
        <position position="202"/>
    </location>
    <ligand>
        <name>a ubiquinone</name>
        <dbReference type="ChEBI" id="CHEBI:16389"/>
    </ligand>
</feature>
<feature type="sequence conflict" description="In Ref. 2; AAN04879." evidence="5" ref="2">
    <original>G</original>
    <variation>R</variation>
    <location>
        <position position="371"/>
    </location>
</feature>
<keyword id="KW-0249">Electron transport</keyword>
<keyword id="KW-0349">Heme</keyword>
<keyword id="KW-0408">Iron</keyword>
<keyword id="KW-0472">Membrane</keyword>
<keyword id="KW-0479">Metal-binding</keyword>
<keyword id="KW-0496">Mitochondrion</keyword>
<keyword id="KW-0999">Mitochondrion inner membrane</keyword>
<keyword id="KW-0679">Respiratory chain</keyword>
<keyword id="KW-0812">Transmembrane</keyword>
<keyword id="KW-1133">Transmembrane helix</keyword>
<keyword id="KW-0813">Transport</keyword>
<keyword id="KW-0830">Ubiquinone</keyword>
<comment type="function">
    <text evidence="2">Component of the ubiquinol-cytochrome c reductase complex (complex III or cytochrome b-c1 complex) that is part of the mitochondrial respiratory chain. The b-c1 complex mediates electron transfer from ubiquinol to cytochrome c. Contributes to the generation of a proton gradient across the mitochondrial membrane that is then used for ATP synthesis.</text>
</comment>
<comment type="cofactor">
    <cofactor evidence="2">
        <name>heme b</name>
        <dbReference type="ChEBI" id="CHEBI:60344"/>
    </cofactor>
    <text evidence="2">Binds 2 heme b groups non-covalently.</text>
</comment>
<comment type="subunit">
    <text evidence="2">The cytochrome bc1 complex contains 11 subunits: 3 respiratory subunits (MT-CYB, CYC1 and UQCRFS1), 2 core proteins (UQCRC1 and UQCRC2) and 6 low-molecular weight proteins (UQCRH/QCR6, UQCRB/QCR7, UQCRQ/QCR8, UQCR10/QCR9, UQCR11/QCR10 and a cleavage product of UQCRFS1). This cytochrome bc1 complex then forms a dimer.</text>
</comment>
<comment type="subcellular location">
    <subcellularLocation>
        <location evidence="2">Mitochondrion inner membrane</location>
        <topology evidence="2">Multi-pass membrane protein</topology>
    </subcellularLocation>
</comment>
<comment type="miscellaneous">
    <text evidence="1">Heme 1 (or BL or b562) is low-potential and absorbs at about 562 nm, and heme 2 (or BH or b566) is high-potential and absorbs at about 566 nm.</text>
</comment>
<comment type="similarity">
    <text evidence="3 4">Belongs to the cytochrome b family.</text>
</comment>
<comment type="caution">
    <text evidence="2">The full-length protein contains only eight transmembrane helices, not nine as predicted by bioinformatics tools.</text>
</comment>
<sequence>MAPNIRKSHPLLKMINNSLIDLPAPSNISAWWNFGSLLAVCLATQILTGLLLAMHYTADTSLAFWSVAHTCRNVQYGWLIRNLHANGASFFFICIFLHIGRGLYYGSYLYKETWNTGVILLLTLMATAFVGYVLPWGQMSFWGATVITNLFSAIPYIGQTLVEWAWGGFSVDNPTLTRFFALHFLLPFVIAGITIIHLTFLHESGSNNPLGISSNSDKIPFHPYYSLKDILGLALMFIPFLALALFSPNFLGDPENFTPANPLVTPPHIKPEWYFLFAYAILRSIPNKLGGVLALAASVLILLLIPFLHKSKQRTMTFRPLSQILFWLLVANLLVLTWIGSQPVEHPFIIIGQVASFSYFNILLILFPMAGALENKMLNY</sequence>
<protein>
    <recommendedName>
        <fullName>Cytochrome b</fullName>
    </recommendedName>
    <alternativeName>
        <fullName>Complex III subunit 3</fullName>
    </alternativeName>
    <alternativeName>
        <fullName>Complex III subunit III</fullName>
    </alternativeName>
    <alternativeName>
        <fullName>Cytochrome b-c1 complex subunit 3</fullName>
    </alternativeName>
    <alternativeName>
        <fullName>Ubiquinol-cytochrome-c reductase complex cytochrome b subunit</fullName>
    </alternativeName>
</protein>
<geneLocation type="mitochondrion"/>
<reference key="1">
    <citation type="journal article" date="1999" name="Mol. Phylogenet. Evol.">
        <title>A molecular phylogeny of the pheasants and partridges suggests that these lineages are not monophyletic.</title>
        <authorList>
            <person name="Kimball R.T."/>
            <person name="Braun E.L."/>
            <person name="Zwartjes P.W."/>
            <person name="Crowe T.M."/>
            <person name="Ligon J.D."/>
        </authorList>
    </citation>
    <scope>NUCLEOTIDE SEQUENCE [GENOMIC DNA]</scope>
</reference>
<reference key="2">
    <citation type="journal article" date="2003" name="J. Hered.">
        <title>Phylogenetic relationships of the Phasianidae reveals possible non-pheasant taxa.</title>
        <authorList>
            <person name="Bush K.L."/>
            <person name="Strobeck C."/>
        </authorList>
    </citation>
    <scope>NUCLEOTIDE SEQUENCE [GENOMIC DNA]</scope>
    <source>
        <tissue>Blood</tissue>
    </source>
</reference>